<protein>
    <recommendedName>
        <fullName evidence="1">2-succinyl-5-enolpyruvyl-6-hydroxy-3-cyclohexene-1-carboxylate synthase</fullName>
        <shortName evidence="1">SEPHCHC synthase</shortName>
        <ecNumber evidence="1">2.2.1.9</ecNumber>
    </recommendedName>
    <alternativeName>
        <fullName evidence="1">Menaquinone biosynthesis protein MenD</fullName>
    </alternativeName>
</protein>
<evidence type="ECO:0000255" key="1">
    <source>
        <dbReference type="HAMAP-Rule" id="MF_01659"/>
    </source>
</evidence>
<evidence type="ECO:0000305" key="2"/>
<accession>Q8KBE8</accession>
<organism>
    <name type="scientific">Chlorobaculum tepidum (strain ATCC 49652 / DSM 12025 / NBRC 103806 / TLS)</name>
    <name type="common">Chlorobium tepidum</name>
    <dbReference type="NCBI Taxonomy" id="194439"/>
    <lineage>
        <taxon>Bacteria</taxon>
        <taxon>Pseudomonadati</taxon>
        <taxon>Chlorobiota</taxon>
        <taxon>Chlorobiia</taxon>
        <taxon>Chlorobiales</taxon>
        <taxon>Chlorobiaceae</taxon>
        <taxon>Chlorobaculum</taxon>
    </lineage>
</organism>
<keyword id="KW-0460">Magnesium</keyword>
<keyword id="KW-0464">Manganese</keyword>
<keyword id="KW-0474">Menaquinone biosynthesis</keyword>
<keyword id="KW-0479">Metal-binding</keyword>
<keyword id="KW-1185">Reference proteome</keyword>
<keyword id="KW-0786">Thiamine pyrophosphate</keyword>
<keyword id="KW-0808">Transferase</keyword>
<comment type="function">
    <text evidence="1">Catalyzes the thiamine diphosphate-dependent decarboxylation of 2-oxoglutarate and the subsequent addition of the resulting succinic semialdehyde-thiamine pyrophosphate anion to isochorismate to yield 2-succinyl-5-enolpyruvyl-6-hydroxy-3-cyclohexene-1-carboxylate (SEPHCHC).</text>
</comment>
<comment type="catalytic activity">
    <reaction evidence="1">
        <text>isochorismate + 2-oxoglutarate + H(+) = 5-enolpyruvoyl-6-hydroxy-2-succinyl-cyclohex-3-ene-1-carboxylate + CO2</text>
        <dbReference type="Rhea" id="RHEA:25593"/>
        <dbReference type="ChEBI" id="CHEBI:15378"/>
        <dbReference type="ChEBI" id="CHEBI:16526"/>
        <dbReference type="ChEBI" id="CHEBI:16810"/>
        <dbReference type="ChEBI" id="CHEBI:29780"/>
        <dbReference type="ChEBI" id="CHEBI:58818"/>
        <dbReference type="EC" id="2.2.1.9"/>
    </reaction>
</comment>
<comment type="cofactor">
    <cofactor evidence="1">
        <name>Mg(2+)</name>
        <dbReference type="ChEBI" id="CHEBI:18420"/>
    </cofactor>
    <cofactor evidence="1">
        <name>Mn(2+)</name>
        <dbReference type="ChEBI" id="CHEBI:29035"/>
    </cofactor>
</comment>
<comment type="cofactor">
    <cofactor evidence="1">
        <name>thiamine diphosphate</name>
        <dbReference type="ChEBI" id="CHEBI:58937"/>
    </cofactor>
    <text evidence="1">Binds 1 thiamine pyrophosphate per subunit.</text>
</comment>
<comment type="pathway">
    <text evidence="1">Quinol/quinone metabolism; 1,4-dihydroxy-2-naphthoate biosynthesis; 1,4-dihydroxy-2-naphthoate from chorismate: step 2/7.</text>
</comment>
<comment type="pathway">
    <text evidence="1">Quinol/quinone metabolism; menaquinone biosynthesis.</text>
</comment>
<comment type="subunit">
    <text evidence="1">Homodimer.</text>
</comment>
<comment type="similarity">
    <text evidence="1">Belongs to the TPP enzyme family. MenD subfamily.</text>
</comment>
<comment type="sequence caution" evidence="2">
    <conflict type="erroneous initiation">
        <sequence resource="EMBL-CDS" id="AAM73060"/>
    </conflict>
</comment>
<name>MEND_CHLTE</name>
<proteinExistence type="inferred from homology"/>
<sequence>MNSKQITTLWCAVIVEELIRQEAGFFCISPGSRSTPLTLAVASNPKARFRMFPDERSAGFYALGYARATGMPAVLVCTSGTAVANYFPAVVEASADAQPMLVLSADRPFELLECGANQAIRQQNIFGSYTRWSFELPEPGIATPLASLLSTVDHAVRKSLSLPAGPVHLNLPFREPLEPEAPDPGHPWAAPLETWQASGEPWSRFARPLHEPSAESIVTLRELLAQAERPLFVAGSMSNAADGEAVAALAESLGVPLFADLTSGIRLSSDCTPWQLAFQNEAFVERFQPDVVIHFGGHVIGKQPAMALRKQPPLHYVVVREHPGRFDPDHNVTLTLEASPAAVASALEGCREPVPGIRCRDAFSAASGIIDKMACVPELAVSEISAPRIVSSLAGDGHALFVANSMPARDMDLYAAPVAQKPLQVALNRGVSGIDGIISTAAGFSAGLGKPTTLLIGDISFLHDLNALCLLNHPWNPLIVIVLNNHGGSIFSFLPIASQTDRLDECFATPQNFSIESAARTFGIDYACPETNGDFTQLYAEALTTKKSLIIEIRSDREKNLLLHRSLKARLDPVFEKADCSR</sequence>
<dbReference type="EC" id="2.2.1.9" evidence="1"/>
<dbReference type="EMBL" id="AE006470">
    <property type="protein sequence ID" value="AAM73060.1"/>
    <property type="status" value="ALT_INIT"/>
    <property type="molecule type" value="Genomic_DNA"/>
</dbReference>
<dbReference type="RefSeq" id="NP_662718.1">
    <property type="nucleotide sequence ID" value="NC_002932.3"/>
</dbReference>
<dbReference type="RefSeq" id="WP_164927100.1">
    <property type="nucleotide sequence ID" value="NC_002932.3"/>
</dbReference>
<dbReference type="SMR" id="Q8KBE8"/>
<dbReference type="STRING" id="194439.CT1839"/>
<dbReference type="EnsemblBacteria" id="AAM73060">
    <property type="protein sequence ID" value="AAM73060"/>
    <property type="gene ID" value="CT1839"/>
</dbReference>
<dbReference type="KEGG" id="cte:CT1839"/>
<dbReference type="PATRIC" id="fig|194439.7.peg.1670"/>
<dbReference type="eggNOG" id="COG1165">
    <property type="taxonomic scope" value="Bacteria"/>
</dbReference>
<dbReference type="HOGENOM" id="CLU_006051_3_0_10"/>
<dbReference type="OrthoDB" id="9791859at2"/>
<dbReference type="UniPathway" id="UPA00079"/>
<dbReference type="UniPathway" id="UPA01057">
    <property type="reaction ID" value="UER00164"/>
</dbReference>
<dbReference type="Proteomes" id="UP000001007">
    <property type="component" value="Chromosome"/>
</dbReference>
<dbReference type="GO" id="GO:0070204">
    <property type="term" value="F:2-succinyl-5-enolpyruvyl-6-hydroxy-3-cyclohexene-1-carboxylic-acid synthase activity"/>
    <property type="evidence" value="ECO:0007669"/>
    <property type="project" value="UniProtKB-UniRule"/>
</dbReference>
<dbReference type="GO" id="GO:0000287">
    <property type="term" value="F:magnesium ion binding"/>
    <property type="evidence" value="ECO:0007669"/>
    <property type="project" value="UniProtKB-UniRule"/>
</dbReference>
<dbReference type="GO" id="GO:0030145">
    <property type="term" value="F:manganese ion binding"/>
    <property type="evidence" value="ECO:0007669"/>
    <property type="project" value="UniProtKB-UniRule"/>
</dbReference>
<dbReference type="GO" id="GO:0030976">
    <property type="term" value="F:thiamine pyrophosphate binding"/>
    <property type="evidence" value="ECO:0007669"/>
    <property type="project" value="UniProtKB-UniRule"/>
</dbReference>
<dbReference type="GO" id="GO:0009234">
    <property type="term" value="P:menaquinone biosynthetic process"/>
    <property type="evidence" value="ECO:0007669"/>
    <property type="project" value="UniProtKB-UniRule"/>
</dbReference>
<dbReference type="CDD" id="cd07037">
    <property type="entry name" value="TPP_PYR_MenD"/>
    <property type="match status" value="1"/>
</dbReference>
<dbReference type="CDD" id="cd02009">
    <property type="entry name" value="TPP_SHCHC_synthase"/>
    <property type="match status" value="1"/>
</dbReference>
<dbReference type="Gene3D" id="3.40.50.970">
    <property type="match status" value="2"/>
</dbReference>
<dbReference type="Gene3D" id="3.40.50.1220">
    <property type="entry name" value="TPP-binding domain"/>
    <property type="match status" value="1"/>
</dbReference>
<dbReference type="HAMAP" id="MF_01659">
    <property type="entry name" value="MenD"/>
    <property type="match status" value="1"/>
</dbReference>
<dbReference type="InterPro" id="IPR029035">
    <property type="entry name" value="DHS-like_NAD/FAD-binding_dom"/>
</dbReference>
<dbReference type="InterPro" id="IPR004433">
    <property type="entry name" value="MenaQ_synth_MenD"/>
</dbReference>
<dbReference type="InterPro" id="IPR032264">
    <property type="entry name" value="MenD_middle"/>
</dbReference>
<dbReference type="InterPro" id="IPR029061">
    <property type="entry name" value="THDP-binding"/>
</dbReference>
<dbReference type="InterPro" id="IPR012001">
    <property type="entry name" value="Thiamin_PyroP_enz_TPP-bd_dom"/>
</dbReference>
<dbReference type="InterPro" id="IPR011766">
    <property type="entry name" value="TPP_enzyme_TPP-bd"/>
</dbReference>
<dbReference type="NCBIfam" id="TIGR00173">
    <property type="entry name" value="menD"/>
    <property type="match status" value="1"/>
</dbReference>
<dbReference type="PANTHER" id="PTHR42916">
    <property type="entry name" value="2-SUCCINYL-5-ENOLPYRUVYL-6-HYDROXY-3-CYCLOHEXENE-1-CARBOXYLATE SYNTHASE"/>
    <property type="match status" value="1"/>
</dbReference>
<dbReference type="PANTHER" id="PTHR42916:SF1">
    <property type="entry name" value="PROTEIN PHYLLO, CHLOROPLASTIC"/>
    <property type="match status" value="1"/>
</dbReference>
<dbReference type="Pfam" id="PF02775">
    <property type="entry name" value="TPP_enzyme_C"/>
    <property type="match status" value="1"/>
</dbReference>
<dbReference type="Pfam" id="PF16582">
    <property type="entry name" value="TPP_enzyme_M_2"/>
    <property type="match status" value="1"/>
</dbReference>
<dbReference type="Pfam" id="PF02776">
    <property type="entry name" value="TPP_enzyme_N"/>
    <property type="match status" value="1"/>
</dbReference>
<dbReference type="PIRSF" id="PIRSF004983">
    <property type="entry name" value="MenD"/>
    <property type="match status" value="1"/>
</dbReference>
<dbReference type="SUPFAM" id="SSF52467">
    <property type="entry name" value="DHS-like NAD/FAD-binding domain"/>
    <property type="match status" value="1"/>
</dbReference>
<dbReference type="SUPFAM" id="SSF52518">
    <property type="entry name" value="Thiamin diphosphate-binding fold (THDP-binding)"/>
    <property type="match status" value="2"/>
</dbReference>
<feature type="chain" id="PRO_0000341721" description="2-succinyl-5-enolpyruvyl-6-hydroxy-3-cyclohexene-1-carboxylate synthase">
    <location>
        <begin position="1"/>
        <end position="582"/>
    </location>
</feature>
<reference key="1">
    <citation type="journal article" date="2002" name="Proc. Natl. Acad. Sci. U.S.A.">
        <title>The complete genome sequence of Chlorobium tepidum TLS, a photosynthetic, anaerobic, green-sulfur bacterium.</title>
        <authorList>
            <person name="Eisen J.A."/>
            <person name="Nelson K.E."/>
            <person name="Paulsen I.T."/>
            <person name="Heidelberg J.F."/>
            <person name="Wu M."/>
            <person name="Dodson R.J."/>
            <person name="DeBoy R.T."/>
            <person name="Gwinn M.L."/>
            <person name="Nelson W.C."/>
            <person name="Haft D.H."/>
            <person name="Hickey E.K."/>
            <person name="Peterson J.D."/>
            <person name="Durkin A.S."/>
            <person name="Kolonay J.F."/>
            <person name="Yang F."/>
            <person name="Holt I.E."/>
            <person name="Umayam L.A."/>
            <person name="Mason T.M."/>
            <person name="Brenner M."/>
            <person name="Shea T.P."/>
            <person name="Parksey D.S."/>
            <person name="Nierman W.C."/>
            <person name="Feldblyum T.V."/>
            <person name="Hansen C.L."/>
            <person name="Craven M.B."/>
            <person name="Radune D."/>
            <person name="Vamathevan J.J."/>
            <person name="Khouri H.M."/>
            <person name="White O."/>
            <person name="Gruber T.M."/>
            <person name="Ketchum K.A."/>
            <person name="Venter J.C."/>
            <person name="Tettelin H."/>
            <person name="Bryant D.A."/>
            <person name="Fraser C.M."/>
        </authorList>
    </citation>
    <scope>NUCLEOTIDE SEQUENCE [LARGE SCALE GENOMIC DNA]</scope>
    <source>
        <strain>ATCC 49652 / DSM 12025 / NBRC 103806 / TLS</strain>
    </source>
</reference>
<gene>
    <name evidence="1" type="primary">menD</name>
    <name type="ordered locus">CT1839</name>
</gene>